<dbReference type="EMBL" id="BC149329">
    <property type="protein sequence ID" value="AAI49330.1"/>
    <property type="status" value="ALT_INIT"/>
    <property type="molecule type" value="mRNA"/>
</dbReference>
<dbReference type="RefSeq" id="NP_001192338.1">
    <property type="nucleotide sequence ID" value="NM_001205409.1"/>
</dbReference>
<dbReference type="RefSeq" id="XP_059737437.1">
    <property type="nucleotide sequence ID" value="XM_059881454.1"/>
</dbReference>
<dbReference type="SMR" id="A6QPH8"/>
<dbReference type="FunCoup" id="A6QPH8">
    <property type="interactions" value="1256"/>
</dbReference>
<dbReference type="STRING" id="9913.ENSBTAP00000011920"/>
<dbReference type="PaxDb" id="9913-ENSBTAP00000011920"/>
<dbReference type="GeneID" id="787498"/>
<dbReference type="KEGG" id="bta:787498"/>
<dbReference type="CTD" id="83719"/>
<dbReference type="eggNOG" id="KOG3399">
    <property type="taxonomic scope" value="Eukaryota"/>
</dbReference>
<dbReference type="HOGENOM" id="CLU_043857_5_2_1"/>
<dbReference type="InParanoid" id="A6QPH8"/>
<dbReference type="OrthoDB" id="6407410at2759"/>
<dbReference type="Proteomes" id="UP000009136">
    <property type="component" value="Unplaced"/>
</dbReference>
<dbReference type="GO" id="GO:0005730">
    <property type="term" value="C:nucleolus"/>
    <property type="evidence" value="ECO:0007669"/>
    <property type="project" value="UniProtKB-SubCell"/>
</dbReference>
<dbReference type="GO" id="GO:0046872">
    <property type="term" value="F:metal ion binding"/>
    <property type="evidence" value="ECO:0007669"/>
    <property type="project" value="UniProtKB-KW"/>
</dbReference>
<dbReference type="InterPro" id="IPR034751">
    <property type="entry name" value="Yippee"/>
</dbReference>
<dbReference type="InterPro" id="IPR004910">
    <property type="entry name" value="Yippee/Mis18/Cereblon"/>
</dbReference>
<dbReference type="InterPro" id="IPR039058">
    <property type="entry name" value="Yippee_fam"/>
</dbReference>
<dbReference type="PANTHER" id="PTHR13848">
    <property type="entry name" value="PROTEIN YIPPEE-LIKE CG15309-RELATED"/>
    <property type="match status" value="1"/>
</dbReference>
<dbReference type="Pfam" id="PF03226">
    <property type="entry name" value="Yippee-Mis18"/>
    <property type="match status" value="1"/>
</dbReference>
<dbReference type="PROSITE" id="PS51792">
    <property type="entry name" value="YIPPEE"/>
    <property type="match status" value="1"/>
</dbReference>
<keyword id="KW-0479">Metal-binding</keyword>
<keyword id="KW-0539">Nucleus</keyword>
<keyword id="KW-1185">Reference proteome</keyword>
<keyword id="KW-0832">Ubl conjugation</keyword>
<keyword id="KW-0862">Zinc</keyword>
<feature type="chain" id="PRO_0000373877" description="Protein yippee-like 3">
    <location>
        <begin position="1"/>
        <end position="119"/>
    </location>
</feature>
<feature type="domain" description="Yippee" evidence="2">
    <location>
        <begin position="19"/>
        <end position="116"/>
    </location>
</feature>
<feature type="binding site" evidence="2">
    <location>
        <position position="23"/>
    </location>
    <ligand>
        <name>Zn(2+)</name>
        <dbReference type="ChEBI" id="CHEBI:29105"/>
    </ligand>
</feature>
<feature type="binding site" evidence="2">
    <location>
        <position position="26"/>
    </location>
    <ligand>
        <name>Zn(2+)</name>
        <dbReference type="ChEBI" id="CHEBI:29105"/>
    </ligand>
</feature>
<feature type="binding site" evidence="2">
    <location>
        <position position="79"/>
    </location>
    <ligand>
        <name>Zn(2+)</name>
        <dbReference type="ChEBI" id="CHEBI:29105"/>
    </ligand>
</feature>
<feature type="binding site" evidence="2">
    <location>
        <position position="82"/>
    </location>
    <ligand>
        <name>Zn(2+)</name>
        <dbReference type="ChEBI" id="CHEBI:29105"/>
    </ligand>
</feature>
<accession>A6QPH8</accession>
<comment type="function">
    <text evidence="1">Involved in proliferation and apoptosis in myeloid precursor cells.</text>
</comment>
<comment type="subcellular location">
    <subcellularLocation>
        <location evidence="1">Nucleus</location>
        <location evidence="1">Nucleolus</location>
    </subcellularLocation>
</comment>
<comment type="PTM">
    <text evidence="1">Probably ubiquitinated leading to its degradation by the proteasome.</text>
</comment>
<comment type="similarity">
    <text evidence="3">Belongs to the yippee family.</text>
</comment>
<comment type="sequence caution" evidence="3">
    <conflict type="erroneous initiation">
        <sequence resource="EMBL-CDS" id="AAI49330"/>
    </conflict>
</comment>
<gene>
    <name type="primary">YPEL3</name>
</gene>
<organism>
    <name type="scientific">Bos taurus</name>
    <name type="common">Bovine</name>
    <dbReference type="NCBI Taxonomy" id="9913"/>
    <lineage>
        <taxon>Eukaryota</taxon>
        <taxon>Metazoa</taxon>
        <taxon>Chordata</taxon>
        <taxon>Craniata</taxon>
        <taxon>Vertebrata</taxon>
        <taxon>Euteleostomi</taxon>
        <taxon>Mammalia</taxon>
        <taxon>Eutheria</taxon>
        <taxon>Laurasiatheria</taxon>
        <taxon>Artiodactyla</taxon>
        <taxon>Ruminantia</taxon>
        <taxon>Pecora</taxon>
        <taxon>Bovidae</taxon>
        <taxon>Bovinae</taxon>
        <taxon>Bos</taxon>
    </lineage>
</organism>
<reference key="1">
    <citation type="submission" date="2007-07" db="EMBL/GenBank/DDBJ databases">
        <authorList>
            <consortium name="NIH - Mammalian Gene Collection (MGC) project"/>
        </authorList>
    </citation>
    <scope>NUCLEOTIDE SEQUENCE [LARGE SCALE MRNA]</scope>
    <source>
        <strain>Hereford</strain>
        <tissue>Fetal cerebellum</tissue>
    </source>
</reference>
<evidence type="ECO:0000250" key="1"/>
<evidence type="ECO:0000255" key="2">
    <source>
        <dbReference type="PROSITE-ProRule" id="PRU01128"/>
    </source>
</evidence>
<evidence type="ECO:0000305" key="3"/>
<proteinExistence type="inferred from homology"/>
<name>YPEL3_BOVIN</name>
<sequence length="119" mass="13608">MVRISKPKTFQAYLDDCHRRYSCAHCRAHLANHDDLISKSFQGSQGRAYLFNSVVNVGCGPAEERVLLTGLHAVADIHCENCKTTLGWKYEQAFESSQKYKEGKYIIELNHMIKDNGWD</sequence>
<protein>
    <recommendedName>
        <fullName>Protein yippee-like 3</fullName>
    </recommendedName>
</protein>